<protein>
    <recommendedName>
        <fullName evidence="1">Large ribosomal subunit protein uL29</fullName>
    </recommendedName>
    <alternativeName>
        <fullName evidence="2">50S ribosomal protein L29</fullName>
    </alternativeName>
</protein>
<name>RL29_MYCVP</name>
<proteinExistence type="inferred from homology"/>
<keyword id="KW-0687">Ribonucleoprotein</keyword>
<keyword id="KW-0689">Ribosomal protein</keyword>
<sequence>MAVGTTTGELRELTDEELTDKLRESKEELFNLRFQMATGQLANNRRLRVVRQEIARLYTVLRERELGLAAGPGGEDS</sequence>
<reference key="1">
    <citation type="submission" date="2006-12" db="EMBL/GenBank/DDBJ databases">
        <title>Complete sequence of Mycobacterium vanbaalenii PYR-1.</title>
        <authorList>
            <consortium name="US DOE Joint Genome Institute"/>
            <person name="Copeland A."/>
            <person name="Lucas S."/>
            <person name="Lapidus A."/>
            <person name="Barry K."/>
            <person name="Detter J.C."/>
            <person name="Glavina del Rio T."/>
            <person name="Hammon N."/>
            <person name="Israni S."/>
            <person name="Dalin E."/>
            <person name="Tice H."/>
            <person name="Pitluck S."/>
            <person name="Singan V."/>
            <person name="Schmutz J."/>
            <person name="Larimer F."/>
            <person name="Land M."/>
            <person name="Hauser L."/>
            <person name="Kyrpides N."/>
            <person name="Anderson I.J."/>
            <person name="Miller C."/>
            <person name="Richardson P."/>
        </authorList>
    </citation>
    <scope>NUCLEOTIDE SEQUENCE [LARGE SCALE GENOMIC DNA]</scope>
    <source>
        <strain>DSM 7251 / JCM 13017 / BCRC 16820 / KCTC 9966 / NRRL B-24157 / PYR-1</strain>
    </source>
</reference>
<organism>
    <name type="scientific">Mycolicibacterium vanbaalenii (strain DSM 7251 / JCM 13017 / BCRC 16820 / KCTC 9966 / NRRL B-24157 / PYR-1)</name>
    <name type="common">Mycobacterium vanbaalenii</name>
    <dbReference type="NCBI Taxonomy" id="350058"/>
    <lineage>
        <taxon>Bacteria</taxon>
        <taxon>Bacillati</taxon>
        <taxon>Actinomycetota</taxon>
        <taxon>Actinomycetes</taxon>
        <taxon>Mycobacteriales</taxon>
        <taxon>Mycobacteriaceae</taxon>
        <taxon>Mycolicibacterium</taxon>
    </lineage>
</organism>
<comment type="similarity">
    <text evidence="1">Belongs to the universal ribosomal protein uL29 family.</text>
</comment>
<evidence type="ECO:0000255" key="1">
    <source>
        <dbReference type="HAMAP-Rule" id="MF_00374"/>
    </source>
</evidence>
<evidence type="ECO:0000305" key="2"/>
<gene>
    <name evidence="1" type="primary">rpmC</name>
    <name type="ordered locus">Mvan_1313</name>
</gene>
<accession>A1T4P7</accession>
<feature type="chain" id="PRO_1000007537" description="Large ribosomal subunit protein uL29">
    <location>
        <begin position="1"/>
        <end position="77"/>
    </location>
</feature>
<dbReference type="EMBL" id="CP000511">
    <property type="protein sequence ID" value="ABM12147.1"/>
    <property type="molecule type" value="Genomic_DNA"/>
</dbReference>
<dbReference type="RefSeq" id="WP_011778577.1">
    <property type="nucleotide sequence ID" value="NZ_JACKSD010000069.1"/>
</dbReference>
<dbReference type="SMR" id="A1T4P7"/>
<dbReference type="STRING" id="350058.Mvan_1313"/>
<dbReference type="KEGG" id="mva:Mvan_1313"/>
<dbReference type="eggNOG" id="COG0255">
    <property type="taxonomic scope" value="Bacteria"/>
</dbReference>
<dbReference type="HOGENOM" id="CLU_158491_3_3_11"/>
<dbReference type="Proteomes" id="UP000009159">
    <property type="component" value="Chromosome"/>
</dbReference>
<dbReference type="GO" id="GO:0022625">
    <property type="term" value="C:cytosolic large ribosomal subunit"/>
    <property type="evidence" value="ECO:0007669"/>
    <property type="project" value="TreeGrafter"/>
</dbReference>
<dbReference type="GO" id="GO:0003735">
    <property type="term" value="F:structural constituent of ribosome"/>
    <property type="evidence" value="ECO:0007669"/>
    <property type="project" value="InterPro"/>
</dbReference>
<dbReference type="GO" id="GO:0006412">
    <property type="term" value="P:translation"/>
    <property type="evidence" value="ECO:0007669"/>
    <property type="project" value="UniProtKB-UniRule"/>
</dbReference>
<dbReference type="CDD" id="cd00427">
    <property type="entry name" value="Ribosomal_L29_HIP"/>
    <property type="match status" value="1"/>
</dbReference>
<dbReference type="FunFam" id="1.10.287.310:FF:000001">
    <property type="entry name" value="50S ribosomal protein L29"/>
    <property type="match status" value="1"/>
</dbReference>
<dbReference type="Gene3D" id="1.10.287.310">
    <property type="match status" value="1"/>
</dbReference>
<dbReference type="HAMAP" id="MF_00374">
    <property type="entry name" value="Ribosomal_uL29"/>
    <property type="match status" value="1"/>
</dbReference>
<dbReference type="InterPro" id="IPR050063">
    <property type="entry name" value="Ribosomal_protein_uL29"/>
</dbReference>
<dbReference type="InterPro" id="IPR001854">
    <property type="entry name" value="Ribosomal_uL29"/>
</dbReference>
<dbReference type="InterPro" id="IPR018254">
    <property type="entry name" value="Ribosomal_uL29_CS"/>
</dbReference>
<dbReference type="InterPro" id="IPR036049">
    <property type="entry name" value="Ribosomal_uL29_sf"/>
</dbReference>
<dbReference type="NCBIfam" id="TIGR00012">
    <property type="entry name" value="L29"/>
    <property type="match status" value="1"/>
</dbReference>
<dbReference type="PANTHER" id="PTHR10916">
    <property type="entry name" value="60S RIBOSOMAL PROTEIN L35/50S RIBOSOMAL PROTEIN L29"/>
    <property type="match status" value="1"/>
</dbReference>
<dbReference type="PANTHER" id="PTHR10916:SF0">
    <property type="entry name" value="LARGE RIBOSOMAL SUBUNIT PROTEIN UL29C"/>
    <property type="match status" value="1"/>
</dbReference>
<dbReference type="Pfam" id="PF00831">
    <property type="entry name" value="Ribosomal_L29"/>
    <property type="match status" value="1"/>
</dbReference>
<dbReference type="SUPFAM" id="SSF46561">
    <property type="entry name" value="Ribosomal protein L29 (L29p)"/>
    <property type="match status" value="1"/>
</dbReference>
<dbReference type="PROSITE" id="PS00579">
    <property type="entry name" value="RIBOSOMAL_L29"/>
    <property type="match status" value="1"/>
</dbReference>